<comment type="function">
    <text evidence="1">Prevents the cell division inhibition by proteins MinC and MinD at internal division sites while permitting inhibition at polar sites. This ensures cell division at the proper site by restricting the formation of a division septum at the midpoint of the long axis of the cell.</text>
</comment>
<comment type="similarity">
    <text evidence="1">Belongs to the MinE family.</text>
</comment>
<proteinExistence type="inferred from homology"/>
<reference key="1">
    <citation type="submission" date="2008-04" db="EMBL/GenBank/DDBJ databases">
        <title>Complete sequence of Clostridium botulinum strain Eklund.</title>
        <authorList>
            <person name="Brinkac L.M."/>
            <person name="Brown J.L."/>
            <person name="Bruce D."/>
            <person name="Detter C."/>
            <person name="Munk C."/>
            <person name="Smith L.A."/>
            <person name="Smith T.J."/>
            <person name="Sutton G."/>
            <person name="Brettin T.S."/>
        </authorList>
    </citation>
    <scope>NUCLEOTIDE SEQUENCE [LARGE SCALE GENOMIC DNA]</scope>
    <source>
        <strain>Eklund 17B / Type B</strain>
    </source>
</reference>
<gene>
    <name evidence="1" type="primary">minE</name>
    <name type="ordered locus">CLL_A0569</name>
</gene>
<organism>
    <name type="scientific">Clostridium botulinum (strain Eklund 17B / Type B)</name>
    <dbReference type="NCBI Taxonomy" id="935198"/>
    <lineage>
        <taxon>Bacteria</taxon>
        <taxon>Bacillati</taxon>
        <taxon>Bacillota</taxon>
        <taxon>Clostridia</taxon>
        <taxon>Eubacteriales</taxon>
        <taxon>Clostridiaceae</taxon>
        <taxon>Clostridium</taxon>
    </lineage>
</organism>
<dbReference type="EMBL" id="CP001056">
    <property type="protein sequence ID" value="ACD24807.1"/>
    <property type="molecule type" value="Genomic_DNA"/>
</dbReference>
<dbReference type="KEGG" id="cbk:CLL_A0569"/>
<dbReference type="PATRIC" id="fig|935198.13.peg.516"/>
<dbReference type="HOGENOM" id="CLU_137929_1_0_9"/>
<dbReference type="Proteomes" id="UP000001195">
    <property type="component" value="Chromosome"/>
</dbReference>
<dbReference type="GO" id="GO:0051301">
    <property type="term" value="P:cell division"/>
    <property type="evidence" value="ECO:0007669"/>
    <property type="project" value="UniProtKB-KW"/>
</dbReference>
<dbReference type="GO" id="GO:0032955">
    <property type="term" value="P:regulation of division septum assembly"/>
    <property type="evidence" value="ECO:0007669"/>
    <property type="project" value="InterPro"/>
</dbReference>
<dbReference type="Gene3D" id="3.30.1070.10">
    <property type="entry name" value="Cell division topological specificity factor MinE"/>
    <property type="match status" value="1"/>
</dbReference>
<dbReference type="HAMAP" id="MF_00262">
    <property type="entry name" value="MinE"/>
    <property type="match status" value="1"/>
</dbReference>
<dbReference type="InterPro" id="IPR005527">
    <property type="entry name" value="MinE"/>
</dbReference>
<dbReference type="InterPro" id="IPR036707">
    <property type="entry name" value="MinE_sf"/>
</dbReference>
<dbReference type="NCBIfam" id="TIGR01215">
    <property type="entry name" value="minE"/>
    <property type="match status" value="1"/>
</dbReference>
<dbReference type="Pfam" id="PF03776">
    <property type="entry name" value="MinE"/>
    <property type="match status" value="1"/>
</dbReference>
<dbReference type="SUPFAM" id="SSF55229">
    <property type="entry name" value="Cell division protein MinE topological specificity domain"/>
    <property type="match status" value="1"/>
</dbReference>
<protein>
    <recommendedName>
        <fullName evidence="1">Cell division topological specificity factor</fullName>
    </recommendedName>
</protein>
<keyword id="KW-0131">Cell cycle</keyword>
<keyword id="KW-0132">Cell division</keyword>
<sequence>MGFFKGLSSRPTPKQVAKDRLKLILIHDRGEIPTDTLEKIRKEILGVISKYIEIQVDDVEISVNKSEDMEGENTSALIASIPIKSIRR</sequence>
<accession>B2TK62</accession>
<feature type="chain" id="PRO_1000114212" description="Cell division topological specificity factor">
    <location>
        <begin position="1"/>
        <end position="88"/>
    </location>
</feature>
<evidence type="ECO:0000255" key="1">
    <source>
        <dbReference type="HAMAP-Rule" id="MF_00262"/>
    </source>
</evidence>
<name>MINE_CLOBB</name>